<keyword id="KW-0002">3D-structure</keyword>
<keyword id="KW-0194">Cyanelle</keyword>
<keyword id="KW-0472">Membrane</keyword>
<keyword id="KW-0602">Photosynthesis</keyword>
<keyword id="KW-0603">Photosystem I</keyword>
<keyword id="KW-0934">Plastid</keyword>
<keyword id="KW-0793">Thylakoid</keyword>
<keyword id="KW-0812">Transmembrane</keyword>
<keyword id="KW-1133">Transmembrane helix</keyword>
<organism>
    <name type="scientific">Cyanophora paradoxa</name>
    <dbReference type="NCBI Taxonomy" id="2762"/>
    <lineage>
        <taxon>Eukaryota</taxon>
        <taxon>Glaucocystophyceae</taxon>
        <taxon>Cyanophoraceae</taxon>
        <taxon>Cyanophora</taxon>
    </lineage>
</organism>
<accession>P48117</accession>
<sequence length="40" mass="4481">MSFSKYLSTAPVIGTLTAFFLAGLLIEINRFNPDLLVYPF</sequence>
<reference key="1">
    <citation type="journal article" date="1995" name="Plant Mol. Biol. Rep.">
        <title>Nucleotide sequence of the cyanelle DNA from Cyanophora paradoxa.</title>
        <authorList>
            <person name="Stirewalt V.L."/>
            <person name="Michalowski C.B."/>
            <person name="Loeffelhardt W."/>
            <person name="Bohnert H.J."/>
            <person name="Bryant D.A."/>
        </authorList>
    </citation>
    <scope>NUCLEOTIDE SEQUENCE [LARGE SCALE GENOMIC DNA]</scope>
    <source>
        <strain>UTEX LB 555 / Pringsheim</strain>
    </source>
</reference>
<reference key="2">
    <citation type="book" date="1997" name="Eukaryotism and symbiosis">
        <title>The complete sequence of the cyanelle genome of Cyanophora paradoxa: the genetic complexity of a primitive plastid.</title>
        <editorList>
            <person name="Schenk H.E.A."/>
            <person name="Herrmann R."/>
            <person name="Jeon K.W."/>
            <person name="Mueller N.E."/>
            <person name="Schwemmler W."/>
        </editorList>
        <authorList>
            <person name="Loeffelhardt W."/>
            <person name="Stirewalt V.L."/>
            <person name="Michalowski C.B."/>
            <person name="Annarella M."/>
            <person name="Farley J.Y."/>
            <person name="Schluchter W.M."/>
            <person name="Chung S."/>
            <person name="Newmann-Spallart C."/>
            <person name="Steiner J.M."/>
            <person name="Jakowitsch J."/>
            <person name="Bohnert H.J."/>
            <person name="Bryant D.A."/>
        </authorList>
    </citation>
    <scope>NUCLEOTIDE SEQUENCE [LARGE SCALE GENOMIC DNA]</scope>
    <source>
        <strain>UTEX LB 555 / Pringsheim</strain>
    </source>
</reference>
<gene>
    <name type="primary">psaJ</name>
</gene>
<comment type="function">
    <text>May help in the organization of the PsaE and PsaF subunits.</text>
</comment>
<comment type="subcellular location">
    <subcellularLocation>
        <location evidence="1">Plastid</location>
        <location evidence="1">Cyanelle thylakoid membrane</location>
        <topology evidence="1">Single-pass membrane protein</topology>
    </subcellularLocation>
</comment>
<comment type="similarity">
    <text evidence="3">Belongs to the PsaJ family.</text>
</comment>
<feature type="chain" id="PRO_0000207788" description="Photosystem I reaction center subunit IX">
    <location>
        <begin position="1"/>
        <end position="40"/>
    </location>
</feature>
<feature type="transmembrane region" description="Helical" evidence="2">
    <location>
        <begin position="6"/>
        <end position="26"/>
    </location>
</feature>
<feature type="helix" evidence="4">
    <location>
        <begin position="6"/>
        <end position="8"/>
    </location>
</feature>
<feature type="helix" evidence="4">
    <location>
        <begin position="10"/>
        <end position="31"/>
    </location>
</feature>
<proteinExistence type="evidence at protein level"/>
<evidence type="ECO:0000250" key="1"/>
<evidence type="ECO:0000255" key="2"/>
<evidence type="ECO:0000305" key="3"/>
<evidence type="ECO:0007829" key="4">
    <source>
        <dbReference type="PDB" id="7DR1"/>
    </source>
</evidence>
<name>PSAJ_CYAPA</name>
<protein>
    <recommendedName>
        <fullName>Photosystem I reaction center subunit IX</fullName>
    </recommendedName>
    <alternativeName>
        <fullName>PSI-J</fullName>
    </alternativeName>
</protein>
<geneLocation type="cyanelle"/>
<dbReference type="EMBL" id="U30821">
    <property type="protein sequence ID" value="AAA81183.1"/>
    <property type="molecule type" value="Genomic_DNA"/>
</dbReference>
<dbReference type="PIR" id="T06840">
    <property type="entry name" value="T06840"/>
</dbReference>
<dbReference type="RefSeq" id="NP_043152.1">
    <property type="nucleotide sequence ID" value="NC_001675.1"/>
</dbReference>
<dbReference type="PDB" id="7DR0">
    <property type="method" value="EM"/>
    <property type="resolution" value="3.30 A"/>
    <property type="chains" value="J=1-40"/>
</dbReference>
<dbReference type="PDB" id="7DR1">
    <property type="method" value="EM"/>
    <property type="resolution" value="3.20 A"/>
    <property type="chains" value="J=1-40"/>
</dbReference>
<dbReference type="PDB" id="7DR2">
    <property type="method" value="EM"/>
    <property type="resolution" value="3.80 A"/>
    <property type="chains" value="aJ/bJ/cJ/dJ=1-40"/>
</dbReference>
<dbReference type="PDBsum" id="7DR0"/>
<dbReference type="PDBsum" id="7DR1"/>
<dbReference type="PDBsum" id="7DR2"/>
<dbReference type="EMDB" id="EMD-30820"/>
<dbReference type="EMDB" id="EMD-30821"/>
<dbReference type="EMDB" id="EMD-30823"/>
<dbReference type="SMR" id="P48117"/>
<dbReference type="GeneID" id="801577"/>
<dbReference type="GO" id="GO:0033115">
    <property type="term" value="C:cyanelle thylakoid membrane"/>
    <property type="evidence" value="ECO:0007669"/>
    <property type="project" value="UniProtKB-SubCell"/>
</dbReference>
<dbReference type="GO" id="GO:0009522">
    <property type="term" value="C:photosystem I"/>
    <property type="evidence" value="ECO:0007669"/>
    <property type="project" value="UniProtKB-KW"/>
</dbReference>
<dbReference type="GO" id="GO:0015979">
    <property type="term" value="P:photosynthesis"/>
    <property type="evidence" value="ECO:0007669"/>
    <property type="project" value="UniProtKB-UniRule"/>
</dbReference>
<dbReference type="Gene3D" id="1.20.5.510">
    <property type="entry name" value="Single helix bin"/>
    <property type="match status" value="1"/>
</dbReference>
<dbReference type="HAMAP" id="MF_00522">
    <property type="entry name" value="PSI_PsaJ"/>
    <property type="match status" value="1"/>
</dbReference>
<dbReference type="InterPro" id="IPR002615">
    <property type="entry name" value="PSI_PsaJ"/>
</dbReference>
<dbReference type="InterPro" id="IPR036062">
    <property type="entry name" value="PSI_PsaJ_sf"/>
</dbReference>
<dbReference type="PANTHER" id="PTHR36082">
    <property type="match status" value="1"/>
</dbReference>
<dbReference type="PANTHER" id="PTHR36082:SF2">
    <property type="entry name" value="PHOTOSYSTEM I REACTION CENTER SUBUNIT IX"/>
    <property type="match status" value="1"/>
</dbReference>
<dbReference type="Pfam" id="PF01701">
    <property type="entry name" value="PSI_PsaJ"/>
    <property type="match status" value="1"/>
</dbReference>
<dbReference type="SUPFAM" id="SSF81544">
    <property type="entry name" value="Subunit IX of photosystem I reaction centre, PsaJ"/>
    <property type="match status" value="1"/>
</dbReference>